<sequence length="398" mass="43388">MKQLTILGSTGSIGCSTLDVVRHNPEHFRVVALVAGKNVTRMVEQCLEFSPRYAVMDDEASAKLLKTMLQQQGSRTEVLSGQQAACDMAALEDVDQVMAAIVGAAGLLPTLAAIRAGKTILLANKESLVTCGRLFMDAVKQSKAQLLPVDSEHNAIFQSLPQPIQHNLGYADLEQNGVVSILLTGSGGPFRETPLRDLATMTPDQACRHPNWSMGRKISVDSATMMNKGLEYIEARWLFNASASQMEVLIHPQSVIHSMVRYQDGSVLAQLGEPDMRTPIAHTMAWPNRVNSGVKPLDFCKLSALTFAAPDYDRYPCLKLAMEAFEQGQAATTALNAANEITVAAFLAQQIRFTDIAALNLSVLEKMDMREPQCVDDVLSVDANAREVARKEVMRLAS</sequence>
<reference key="1">
    <citation type="journal article" date="1998" name="Proc. Natl. Acad. Sci. U.S.A.">
        <title>A 1-deoxy-D-xylulose 5-phosphate reductoisomerase catalyzing the formation of 2-C-methyl-D-erythritol 4-phosphate in an alternative nonmevalonate pathway for terpenoid biosynthesis.</title>
        <authorList>
            <person name="Takahashi S."/>
            <person name="Kuzuyama T."/>
            <person name="Watanabe H."/>
            <person name="Seto H."/>
        </authorList>
    </citation>
    <scope>NUCLEOTIDE SEQUENCE [GENOMIC DNA]</scope>
    <scope>FUNCTION</scope>
    <scope>CATALYTIC ACTIVITY</scope>
    <scope>PATHWAY</scope>
    <source>
        <strain>K12 / W3110 / ATCC 27325 / DSM 5911</strain>
    </source>
</reference>
<reference key="2">
    <citation type="submission" date="1996-02" db="EMBL/GenBank/DDBJ databases">
        <title>Systematic sequencing of the Escherichia coli genome: analysis of the 4.0 - 6.0 min (189,987 - 281,416bp) region.</title>
        <authorList>
            <person name="Takemoto K."/>
            <person name="Mori H."/>
            <person name="Murayama N."/>
            <person name="Kataoka K."/>
            <person name="Yano M."/>
            <person name="Itoh T."/>
            <person name="Yamamoto Y."/>
            <person name="Inokuchi H."/>
            <person name="Miki T."/>
            <person name="Hatada E."/>
            <person name="Fukuda R."/>
            <person name="Ichihara S."/>
            <person name="Mizuno T."/>
            <person name="Makino K."/>
            <person name="Nakata A."/>
            <person name="Yura T."/>
            <person name="Sampei G."/>
            <person name="Mizobuchi K."/>
        </authorList>
    </citation>
    <scope>NUCLEOTIDE SEQUENCE [LARGE SCALE GENOMIC DNA]</scope>
    <source>
        <strain>K12 / W3110 / ATCC 27325 / DSM 5911</strain>
    </source>
</reference>
<reference key="3">
    <citation type="submission" date="1997-01" db="EMBL/GenBank/DDBJ databases">
        <title>Sequence of minutes 4-25 of Escherichia coli.</title>
        <authorList>
            <person name="Chung E."/>
            <person name="Allen E."/>
            <person name="Araujo R."/>
            <person name="Aparicio A.M."/>
            <person name="Davis K."/>
            <person name="Duncan M."/>
            <person name="Federspiel N."/>
            <person name="Hyman R."/>
            <person name="Kalman S."/>
            <person name="Komp C."/>
            <person name="Kurdi O."/>
            <person name="Lew H."/>
            <person name="Lin D."/>
            <person name="Namath A."/>
            <person name="Oefner P."/>
            <person name="Roberts D."/>
            <person name="Schramm S."/>
            <person name="Davis R.W."/>
        </authorList>
    </citation>
    <scope>NUCLEOTIDE SEQUENCE [LARGE SCALE GENOMIC DNA]</scope>
    <source>
        <strain>K12 / MG1655 / ATCC 47076</strain>
    </source>
</reference>
<reference key="4">
    <citation type="journal article" date="1997" name="Science">
        <title>The complete genome sequence of Escherichia coli K-12.</title>
        <authorList>
            <person name="Blattner F.R."/>
            <person name="Plunkett G. III"/>
            <person name="Bloch C.A."/>
            <person name="Perna N.T."/>
            <person name="Burland V."/>
            <person name="Riley M."/>
            <person name="Collado-Vides J."/>
            <person name="Glasner J.D."/>
            <person name="Rode C.K."/>
            <person name="Mayhew G.F."/>
            <person name="Gregor J."/>
            <person name="Davis N.W."/>
            <person name="Kirkpatrick H.A."/>
            <person name="Goeden M.A."/>
            <person name="Rose D.J."/>
            <person name="Mau B."/>
            <person name="Shao Y."/>
        </authorList>
    </citation>
    <scope>NUCLEOTIDE SEQUENCE [LARGE SCALE GENOMIC DNA]</scope>
    <source>
        <strain>K12 / MG1655 / ATCC 47076</strain>
    </source>
</reference>
<reference key="5">
    <citation type="journal article" date="2006" name="Mol. Syst. Biol.">
        <title>Highly accurate genome sequences of Escherichia coli K-12 strains MG1655 and W3110.</title>
        <authorList>
            <person name="Hayashi K."/>
            <person name="Morooka N."/>
            <person name="Yamamoto Y."/>
            <person name="Fujita K."/>
            <person name="Isono K."/>
            <person name="Choi S."/>
            <person name="Ohtsubo E."/>
            <person name="Baba T."/>
            <person name="Wanner B.L."/>
            <person name="Mori H."/>
            <person name="Horiuchi T."/>
        </authorList>
    </citation>
    <scope>NUCLEOTIDE SEQUENCE [LARGE SCALE GENOMIC DNA]</scope>
    <scope>SEQUENCE REVISION TO 277-284</scope>
    <source>
        <strain>K12 / W3110 / ATCC 27325 / DSM 5911</strain>
    </source>
</reference>
<reference key="6">
    <citation type="journal article" date="1994" name="Nucleic Acids Res.">
        <title>Systematic sequencing of the Escherichia coli genome: analysis of the 2.4-4.1 min (110,917-193,643 bp) region.</title>
        <authorList>
            <person name="Fujita N."/>
            <person name="Mori H."/>
            <person name="Yura T."/>
            <person name="Ishihama A."/>
        </authorList>
    </citation>
    <scope>NUCLEOTIDE SEQUENCE [GENOMIC DNA] OF 1-204</scope>
    <source>
        <strain>K12 / W3110 / ATCC 27325 / DSM 5911</strain>
    </source>
</reference>
<reference key="7">
    <citation type="journal article" date="1992" name="J. Bacteriol.">
        <title>Identification and characterization of the smbA gene, a suppressor of the mukB null mutant of Escherichia coli.</title>
        <authorList>
            <person name="Yamanaka K."/>
            <person name="Ogura T."/>
            <person name="Niki H."/>
            <person name="Hiraga S."/>
        </authorList>
    </citation>
    <scope>NUCLEOTIDE SEQUENCE [GENOMIC DNA] OF 1-49</scope>
</reference>
<reference key="8">
    <citation type="journal article" date="1995" name="Nucleic Acids Res.">
        <title>Detection of new genes in a bacterial genome using Markov models for three gene classes.</title>
        <authorList>
            <person name="Borodovsky M."/>
            <person name="McIninch J."/>
            <person name="Koonin E.V."/>
            <person name="Rudd K.E."/>
            <person name="Medigue C."/>
            <person name="Danchin A."/>
        </authorList>
    </citation>
    <scope>IDENTIFICATION</scope>
</reference>
<reference key="9">
    <citation type="journal article" date="2000" name="FEBS Lett.">
        <title>Biosynthesis of terpenoids: 1-deoxy-D-xylulose-5-phosphate reductoisomerase from Escherichia coli is a class B dehydrogenase.</title>
        <authorList>
            <person name="Radykewicz T."/>
            <person name="Rohdich F."/>
            <person name="Wungsintaweekul J."/>
            <person name="Herz S."/>
            <person name="Kis K."/>
            <person name="Eisenreich W."/>
            <person name="Bacher A."/>
            <person name="Zenk M.H."/>
            <person name="Arigoni D."/>
        </authorList>
    </citation>
    <scope>FUNCTION</scope>
    <scope>CATALYTIC ACTIVITY</scope>
</reference>
<reference key="10">
    <citation type="journal article" date="2000" name="J. Biol. Chem.">
        <title>Characterization of 1-deoxy-D-xylulose 5-phosphate reductoisomerase, an enzyme involved in isopentenyl diphosphate biosynthesis, and identification of its catalytic amino acid residues.</title>
        <authorList>
            <person name="Kuzuyama T."/>
            <person name="Takahashi S."/>
            <person name="Takagi M."/>
            <person name="Seto H."/>
        </authorList>
    </citation>
    <scope>FUNCTION</scope>
    <scope>CATALYTIC ACTIVITY</scope>
    <scope>BIOPHYSICOCHEMICAL PROPERTIES</scope>
    <scope>COFACTOR</scope>
    <scope>MUTAGENESIS OF GLY-14; HIS-153; HIS-209; GLU-231 AND HIS-257</scope>
</reference>
<reference key="11">
    <citation type="journal article" date="2002" name="J. Biochem.">
        <title>Crystal structure of 1-deoxy-D-xylulose 5-phosphate reductoisomerase complexed with cofactors: implications of a flexible loop movement upon substrate binding.</title>
        <authorList>
            <person name="Yajima S."/>
            <person name="Nonaka T."/>
            <person name="Kuzuyama T."/>
            <person name="Seto H."/>
            <person name="Ohsawa K."/>
        </authorList>
    </citation>
    <scope>X-RAY CRYSTALLOGRAPHY (2.2 ANGSTROMS) OF 2-398 IN COMPLEX WITH NADPH</scope>
</reference>
<reference key="12">
    <citation type="journal article" date="2002" name="J. Biol. Chem.">
        <title>Crystal structure of 1-deoxy-D-xylulose-5-phosphate reductoisomerase, a crucial enzyme in the non-mevalonate pathway of isoprenoid biosynthesis.</title>
        <authorList>
            <person name="Reuter K."/>
            <person name="Sanderbrand S."/>
            <person name="Jomaa H."/>
            <person name="Wiesner J."/>
            <person name="Steinbrecher I."/>
            <person name="Beck E."/>
            <person name="Hintz M."/>
            <person name="Klebe G."/>
            <person name="Stubbs M.T."/>
        </authorList>
    </citation>
    <scope>X-RAY CRYSTALLOGRAPHY (2.5 ANGSTROMS)</scope>
    <scope>SUBUNIT</scope>
</reference>
<reference evidence="10 11 12" key="13">
    <citation type="journal article" date="2003" name="J. Biol. Chem.">
        <title>Structural basis of fosmidomycin action revealed by the complex with 2-C-methyl-D-erythritol 4-phosphate synthase (IspC). Implications for the catalytic mechanism and anti-malaria drug development.</title>
        <authorList>
            <person name="Steinbacher S."/>
            <person name="Kaiser J."/>
            <person name="Eisenreich W."/>
            <person name="Huber R."/>
            <person name="Bacher A."/>
            <person name="Rohdich F."/>
        </authorList>
    </citation>
    <scope>X-RAY CRYSTALLOGRAPHY (2.3 ANGSTROMS) IN COMPLEX WITH MANGANESE IONS AND FOSMIDOMYCIN</scope>
    <scope>SUBUNIT</scope>
</reference>
<reference evidence="16 17" key="14">
    <citation type="journal article" date="2004" name="J. Am. Chem. Soc.">
        <title>Crystallographic structures of two bisphosphonate:1-deoxyxylulose-5-phosphate reductoisomerase complexes.</title>
        <authorList>
            <person name="Yajima S."/>
            <person name="Hara K."/>
            <person name="Sanders J.M."/>
            <person name="Yin F."/>
            <person name="Ohsawa K."/>
            <person name="Wiesner J."/>
            <person name="Jomaa H."/>
            <person name="Oldfield E."/>
        </authorList>
    </citation>
    <scope>X-RAY CRYSTALLOGRAPHY (2.3 ANGSTROMS) OF 2-398 IN COMPLEX WITH SUBSTRATE ANALOG</scope>
</reference>
<reference evidence="13 14 15" key="15">
    <citation type="journal article" date="2005" name="J. Mol. Biol.">
        <title>The crystal structure of E.coli 1-deoxy-D-xylulose-5-phosphate reductoisomerase in a ternary complex with the antimalarial compound fosmidomycin and NADPH reveals a tight-binding closed enzyme conformation.</title>
        <authorList>
            <person name="Mac Sweeney A."/>
            <person name="Lange R."/>
            <person name="Fernandes R.P."/>
            <person name="Schulz H."/>
            <person name="Dale G.E."/>
            <person name="Douangamath A."/>
            <person name="Proteau P.J."/>
            <person name="Oefner C."/>
        </authorList>
    </citation>
    <scope>X-RAY CRYSTALLOGRAPHY (2.2 ANGSTROMS) IN COMPLEXES WITH 1-DEOXY-D-XYLULOSE 5-PHOSPHATE; FOSMIDOMYCIN AND NADPH</scope>
    <scope>SUBUNIT</scope>
</reference>
<feature type="chain" id="PRO_0000163651" description="1-deoxy-D-xylulose 5-phosphate reductoisomerase">
    <location>
        <begin position="1"/>
        <end position="398"/>
    </location>
</feature>
<feature type="binding site" evidence="7 15">
    <location>
        <position position="10"/>
    </location>
    <ligand>
        <name>NADPH</name>
        <dbReference type="ChEBI" id="CHEBI:57783"/>
    </ligand>
</feature>
<feature type="binding site" evidence="7 15">
    <location>
        <position position="11"/>
    </location>
    <ligand>
        <name>NADPH</name>
        <dbReference type="ChEBI" id="CHEBI:57783"/>
    </ligand>
</feature>
<feature type="binding site" evidence="7 15">
    <location>
        <position position="12"/>
    </location>
    <ligand>
        <name>NADPH</name>
        <dbReference type="ChEBI" id="CHEBI:57783"/>
    </ligand>
</feature>
<feature type="binding site" evidence="7 15">
    <location>
        <position position="13"/>
    </location>
    <ligand>
        <name>NADPH</name>
        <dbReference type="ChEBI" id="CHEBI:57783"/>
    </ligand>
</feature>
<feature type="binding site" evidence="7 15">
    <location>
        <position position="36"/>
    </location>
    <ligand>
        <name>NADPH</name>
        <dbReference type="ChEBI" id="CHEBI:57783"/>
    </ligand>
</feature>
<feature type="binding site" evidence="7 15">
    <location>
        <position position="37"/>
    </location>
    <ligand>
        <name>NADPH</name>
        <dbReference type="ChEBI" id="CHEBI:57783"/>
    </ligand>
</feature>
<feature type="binding site" evidence="7 15">
    <location>
        <position position="38"/>
    </location>
    <ligand>
        <name>NADPH</name>
        <dbReference type="ChEBI" id="CHEBI:57783"/>
    </ligand>
</feature>
<feature type="binding site" evidence="7 15">
    <location>
        <position position="124"/>
    </location>
    <ligand>
        <name>NADPH</name>
        <dbReference type="ChEBI" id="CHEBI:57783"/>
    </ligand>
</feature>
<feature type="binding site" evidence="7 15">
    <location>
        <position position="125"/>
    </location>
    <ligand>
        <name>1-deoxy-D-xylulose 5-phosphate</name>
        <dbReference type="ChEBI" id="CHEBI:57792"/>
    </ligand>
</feature>
<feature type="binding site" evidence="7 15">
    <location>
        <position position="126"/>
    </location>
    <ligand>
        <name>NADPH</name>
        <dbReference type="ChEBI" id="CHEBI:57783"/>
    </ligand>
</feature>
<feature type="binding site" evidence="5 11 12">
    <location>
        <position position="150"/>
    </location>
    <ligand>
        <name>Mn(2+)</name>
        <dbReference type="ChEBI" id="CHEBI:29035"/>
    </ligand>
</feature>
<feature type="binding site" evidence="7 15">
    <location>
        <position position="151"/>
    </location>
    <ligand>
        <name>1-deoxy-D-xylulose 5-phosphate</name>
        <dbReference type="ChEBI" id="CHEBI:57792"/>
    </ligand>
</feature>
<feature type="binding site" evidence="7 15">
    <location>
        <position position="152"/>
    </location>
    <ligand>
        <name>1-deoxy-D-xylulose 5-phosphate</name>
        <dbReference type="ChEBI" id="CHEBI:57792"/>
    </ligand>
</feature>
<feature type="binding site" evidence="5 11 12">
    <location>
        <position position="152"/>
    </location>
    <ligand>
        <name>Mn(2+)</name>
        <dbReference type="ChEBI" id="CHEBI:29035"/>
    </ligand>
</feature>
<feature type="binding site" evidence="7 15">
    <location>
        <position position="186"/>
    </location>
    <ligand>
        <name>1-deoxy-D-xylulose 5-phosphate</name>
        <dbReference type="ChEBI" id="CHEBI:57792"/>
    </ligand>
</feature>
<feature type="binding site" evidence="7 15">
    <location>
        <position position="209"/>
    </location>
    <ligand>
        <name>1-deoxy-D-xylulose 5-phosphate</name>
        <dbReference type="ChEBI" id="CHEBI:57792"/>
    </ligand>
</feature>
<feature type="binding site" evidence="7 15">
    <location>
        <position position="215"/>
    </location>
    <ligand>
        <name>NADPH</name>
        <dbReference type="ChEBI" id="CHEBI:57783"/>
    </ligand>
</feature>
<feature type="binding site" evidence="7 15">
    <location>
        <position position="222"/>
    </location>
    <ligand>
        <name>1-deoxy-D-xylulose 5-phosphate</name>
        <dbReference type="ChEBI" id="CHEBI:57792"/>
    </ligand>
</feature>
<feature type="binding site" evidence="7 15">
    <location>
        <position position="227"/>
    </location>
    <ligand>
        <name>1-deoxy-D-xylulose 5-phosphate</name>
        <dbReference type="ChEBI" id="CHEBI:57792"/>
    </ligand>
</feature>
<feature type="binding site" evidence="7 15">
    <location>
        <position position="228"/>
    </location>
    <ligand>
        <name>1-deoxy-D-xylulose 5-phosphate</name>
        <dbReference type="ChEBI" id="CHEBI:57792"/>
    </ligand>
</feature>
<feature type="binding site" evidence="7 15">
    <location>
        <position position="231"/>
    </location>
    <ligand>
        <name>1-deoxy-D-xylulose 5-phosphate</name>
        <dbReference type="ChEBI" id="CHEBI:57792"/>
    </ligand>
</feature>
<feature type="binding site" evidence="5 11 12">
    <location>
        <position position="231"/>
    </location>
    <ligand>
        <name>Mn(2+)</name>
        <dbReference type="ChEBI" id="CHEBI:29035"/>
    </ligand>
</feature>
<feature type="mutagenesis site" description="Loss of solubility and activity." evidence="2">
    <original>G</original>
    <variation>D</variation>
    <location>
        <position position="14"/>
    </location>
</feature>
<feature type="mutagenesis site" description="Increase in KM for substrate. Reduces activity 35-fold." evidence="2">
    <original>H</original>
    <variation>Q</variation>
    <location>
        <position position="153"/>
    </location>
</feature>
<feature type="mutagenesis site" description="Increase in KM for substrate. Reduces activity 5000-fold." evidence="2">
    <original>H</original>
    <variation>Q</variation>
    <location>
        <position position="209"/>
    </location>
</feature>
<feature type="mutagenesis site" description="No effect on KM for substrate. Reduces activity by over 99.9%." evidence="2">
    <original>E</original>
    <variation>K</variation>
    <location>
        <position position="231"/>
    </location>
</feature>
<feature type="mutagenesis site" description="Strong increase in KM for substrate. Loss of activity." evidence="2">
    <original>H</original>
    <variation>Q</variation>
    <location>
        <position position="257"/>
    </location>
</feature>
<feature type="strand" evidence="19">
    <location>
        <begin position="2"/>
        <end position="8"/>
    </location>
</feature>
<feature type="helix" evidence="19">
    <location>
        <begin position="12"/>
        <end position="23"/>
    </location>
</feature>
<feature type="turn" evidence="19">
    <location>
        <begin position="25"/>
        <end position="27"/>
    </location>
</feature>
<feature type="strand" evidence="19">
    <location>
        <begin position="28"/>
        <end position="37"/>
    </location>
</feature>
<feature type="helix" evidence="19">
    <location>
        <begin position="39"/>
        <end position="49"/>
    </location>
</feature>
<feature type="strand" evidence="19">
    <location>
        <begin position="52"/>
        <end position="58"/>
    </location>
</feature>
<feature type="helix" evidence="19">
    <location>
        <begin position="59"/>
        <end position="71"/>
    </location>
</feature>
<feature type="strand" evidence="19">
    <location>
        <begin position="77"/>
        <end position="81"/>
    </location>
</feature>
<feature type="helix" evidence="19">
    <location>
        <begin position="82"/>
        <end position="89"/>
    </location>
</feature>
<feature type="strand" evidence="19">
    <location>
        <begin position="96"/>
        <end position="99"/>
    </location>
</feature>
<feature type="helix" evidence="19">
    <location>
        <begin position="104"/>
        <end position="106"/>
    </location>
</feature>
<feature type="helix" evidence="19">
    <location>
        <begin position="107"/>
        <end position="115"/>
    </location>
</feature>
<feature type="strand" evidence="19">
    <location>
        <begin position="119"/>
        <end position="122"/>
    </location>
</feature>
<feature type="helix" evidence="19">
    <location>
        <begin position="125"/>
        <end position="131"/>
    </location>
</feature>
<feature type="helix" evidence="19">
    <location>
        <begin position="133"/>
        <end position="142"/>
    </location>
</feature>
<feature type="strand" evidence="19">
    <location>
        <begin position="145"/>
        <end position="148"/>
    </location>
</feature>
<feature type="helix" evidence="19">
    <location>
        <begin position="151"/>
        <end position="158"/>
    </location>
</feature>
<feature type="helix" evidence="19">
    <location>
        <begin position="162"/>
        <end position="165"/>
    </location>
</feature>
<feature type="turn" evidence="19">
    <location>
        <begin position="166"/>
        <end position="170"/>
    </location>
</feature>
<feature type="helix" evidence="19">
    <location>
        <begin position="174"/>
        <end position="176"/>
    </location>
</feature>
<feature type="strand" evidence="19">
    <location>
        <begin position="178"/>
        <end position="185"/>
    </location>
</feature>
<feature type="turn" evidence="19">
    <location>
        <begin position="189"/>
        <end position="192"/>
    </location>
</feature>
<feature type="helix" evidence="19">
    <location>
        <begin position="195"/>
        <end position="200"/>
    </location>
</feature>
<feature type="helix" evidence="19">
    <location>
        <begin position="203"/>
        <end position="207"/>
    </location>
</feature>
<feature type="strand" evidence="18">
    <location>
        <begin position="210"/>
        <end position="212"/>
    </location>
</feature>
<feature type="helix" evidence="19">
    <location>
        <begin position="216"/>
        <end position="223"/>
    </location>
</feature>
<feature type="helix" evidence="19">
    <location>
        <begin position="226"/>
        <end position="239"/>
    </location>
</feature>
<feature type="helix" evidence="19">
    <location>
        <begin position="243"/>
        <end position="245"/>
    </location>
</feature>
<feature type="strand" evidence="19">
    <location>
        <begin position="246"/>
        <end position="250"/>
    </location>
</feature>
<feature type="strand" evidence="19">
    <location>
        <begin position="256"/>
        <end position="262"/>
    </location>
</feature>
<feature type="strand" evidence="19">
    <location>
        <begin position="267"/>
        <end position="271"/>
    </location>
</feature>
<feature type="helix" evidence="19">
    <location>
        <begin position="277"/>
        <end position="285"/>
    </location>
</feature>
<feature type="turn" evidence="19">
    <location>
        <begin position="299"/>
        <end position="301"/>
    </location>
</feature>
<feature type="turn" evidence="19">
    <location>
        <begin position="312"/>
        <end position="314"/>
    </location>
</feature>
<feature type="helix" evidence="19">
    <location>
        <begin position="316"/>
        <end position="327"/>
    </location>
</feature>
<feature type="helix" evidence="19">
    <location>
        <begin position="329"/>
        <end position="347"/>
    </location>
</feature>
<feature type="helix" evidence="19">
    <location>
        <begin position="355"/>
        <end position="366"/>
    </location>
</feature>
<feature type="helix" evidence="19">
    <location>
        <begin position="375"/>
        <end position="395"/>
    </location>
</feature>
<gene>
    <name type="primary">dxr</name>
    <name type="synonym">ispC</name>
    <name type="synonym">yaeM</name>
    <name type="ordered locus">b0173</name>
    <name type="ordered locus">JW0168</name>
</gene>
<organism>
    <name type="scientific">Escherichia coli (strain K12)</name>
    <dbReference type="NCBI Taxonomy" id="83333"/>
    <lineage>
        <taxon>Bacteria</taxon>
        <taxon>Pseudomonadati</taxon>
        <taxon>Pseudomonadota</taxon>
        <taxon>Gammaproteobacteria</taxon>
        <taxon>Enterobacterales</taxon>
        <taxon>Enterobacteriaceae</taxon>
        <taxon>Escherichia</taxon>
    </lineage>
</organism>
<accession>P45568</accession>
<accession>P77209</accession>
<accession>Q8KMY5</accession>
<protein>
    <recommendedName>
        <fullName>1-deoxy-D-xylulose 5-phosphate reductoisomerase</fullName>
        <shortName>DXP reductoisomerase</shortName>
        <ecNumber evidence="1 2 8">1.1.1.267</ecNumber>
    </recommendedName>
    <alternativeName>
        <fullName>1-deoxyxylulose-5-phosphate reductoisomerase</fullName>
    </alternativeName>
    <alternativeName>
        <fullName>2-C-methyl-D-erythritol 4-phosphate synthase</fullName>
    </alternativeName>
</protein>
<comment type="function">
    <text evidence="1 2 8">Catalyzes the NADPH-dependent rearrangement and reduction of 1-deoxy-D-xylulose-5-phosphate (DXP) to 2-C-methyl-D-erythritol 4-phosphate (MEP).</text>
</comment>
<comment type="catalytic activity">
    <reaction evidence="1 2 8">
        <text>2-C-methyl-D-erythritol 4-phosphate + NADP(+) = 1-deoxy-D-xylulose 5-phosphate + NADPH + H(+)</text>
        <dbReference type="Rhea" id="RHEA:13717"/>
        <dbReference type="ChEBI" id="CHEBI:15378"/>
        <dbReference type="ChEBI" id="CHEBI:57783"/>
        <dbReference type="ChEBI" id="CHEBI:57792"/>
        <dbReference type="ChEBI" id="CHEBI:58262"/>
        <dbReference type="ChEBI" id="CHEBI:58349"/>
        <dbReference type="EC" id="1.1.1.267"/>
    </reaction>
    <physiologicalReaction direction="right-to-left" evidence="1 2 8">
        <dbReference type="Rhea" id="RHEA:13719"/>
    </physiologicalReaction>
</comment>
<comment type="cofactor">
    <cofactor evidence="2">
        <name>Mg(2+)</name>
        <dbReference type="ChEBI" id="CHEBI:18420"/>
    </cofactor>
    <cofactor evidence="2">
        <name>Mn(2+)</name>
        <dbReference type="ChEBI" id="CHEBI:29035"/>
    </cofactor>
    <cofactor evidence="2">
        <name>Co(2+)</name>
        <dbReference type="ChEBI" id="CHEBI:48828"/>
    </cofactor>
    <text evidence="2">Divalent cation. Prefers Mg(2+), Mn(2+) or Co(2+).</text>
</comment>
<comment type="activity regulation">
    <text>Inhibited by fosmidomycin.</text>
</comment>
<comment type="biophysicochemical properties">
    <kinetics>
        <KM evidence="2">250 uM for DXP</KM>
        <text>Measured in the presence of manganese ions.</text>
    </kinetics>
    <phDependence>
        <text evidence="2">Optimum pH is 7.0-8.5.</text>
    </phDependence>
    <temperatureDependence>
        <text evidence="2">Optimum temperature is 40-60 degrees Celsius.</text>
    </temperatureDependence>
</comment>
<comment type="pathway">
    <text evidence="8">Isoprenoid biosynthesis; isopentenyl diphosphate biosynthesis via DXP pathway; isopentenyl diphosphate from 1-deoxy-D-xylulose 5-phosphate: step 1/6.</text>
</comment>
<comment type="subunit">
    <text evidence="3 4 5 6 7">Homodimer.</text>
</comment>
<comment type="similarity">
    <text evidence="9">Belongs to the DXR family.</text>
</comment>
<evidence type="ECO:0000269" key="1">
    <source>
    </source>
</evidence>
<evidence type="ECO:0000269" key="2">
    <source>
    </source>
</evidence>
<evidence type="ECO:0000269" key="3">
    <source>
    </source>
</evidence>
<evidence type="ECO:0000269" key="4">
    <source>
    </source>
</evidence>
<evidence type="ECO:0000269" key="5">
    <source>
    </source>
</evidence>
<evidence type="ECO:0000269" key="6">
    <source>
    </source>
</evidence>
<evidence type="ECO:0000269" key="7">
    <source>
    </source>
</evidence>
<evidence type="ECO:0000269" key="8">
    <source>
    </source>
</evidence>
<evidence type="ECO:0000305" key="9"/>
<evidence type="ECO:0007744" key="10">
    <source>
        <dbReference type="PDB" id="1ONN"/>
    </source>
</evidence>
<evidence type="ECO:0007744" key="11">
    <source>
        <dbReference type="PDB" id="1ONO"/>
    </source>
</evidence>
<evidence type="ECO:0007744" key="12">
    <source>
        <dbReference type="PDB" id="1ONP"/>
    </source>
</evidence>
<evidence type="ECO:0007744" key="13">
    <source>
        <dbReference type="PDB" id="1Q0H"/>
    </source>
</evidence>
<evidence type="ECO:0007744" key="14">
    <source>
        <dbReference type="PDB" id="1Q0L"/>
    </source>
</evidence>
<evidence type="ECO:0007744" key="15">
    <source>
        <dbReference type="PDB" id="1Q0Q"/>
    </source>
</evidence>
<evidence type="ECO:0007744" key="16">
    <source>
        <dbReference type="PDB" id="1T1R"/>
    </source>
</evidence>
<evidence type="ECO:0007744" key="17">
    <source>
        <dbReference type="PDB" id="1T1S"/>
    </source>
</evidence>
<evidence type="ECO:0007829" key="18">
    <source>
        <dbReference type="PDB" id="1JVS"/>
    </source>
</evidence>
<evidence type="ECO:0007829" key="19">
    <source>
        <dbReference type="PDB" id="1Q0Q"/>
    </source>
</evidence>
<proteinExistence type="evidence at protein level"/>
<keyword id="KW-0002">3D-structure</keyword>
<keyword id="KW-0170">Cobalt</keyword>
<keyword id="KW-0414">Isoprene biosynthesis</keyword>
<keyword id="KW-0460">Magnesium</keyword>
<keyword id="KW-0464">Manganese</keyword>
<keyword id="KW-0479">Metal-binding</keyword>
<keyword id="KW-0521">NADP</keyword>
<keyword id="KW-0560">Oxidoreductase</keyword>
<keyword id="KW-1185">Reference proteome</keyword>
<name>DXR_ECOLI</name>
<dbReference type="EC" id="1.1.1.267" evidence="1 2 8"/>
<dbReference type="EMBL" id="AB013300">
    <property type="protein sequence ID" value="BAA32426.1"/>
    <property type="molecule type" value="Genomic_DNA"/>
</dbReference>
<dbReference type="EMBL" id="U70214">
    <property type="protein sequence ID" value="AAB08602.1"/>
    <property type="molecule type" value="Genomic_DNA"/>
</dbReference>
<dbReference type="EMBL" id="U00096">
    <property type="protein sequence ID" value="AAC73284.1"/>
    <property type="molecule type" value="Genomic_DNA"/>
</dbReference>
<dbReference type="EMBL" id="AP009048">
    <property type="protein sequence ID" value="BAA77848.2"/>
    <property type="molecule type" value="Genomic_DNA"/>
</dbReference>
<dbReference type="EMBL" id="D13334">
    <property type="status" value="NOT_ANNOTATED_CDS"/>
    <property type="molecule type" value="Genomic_DNA"/>
</dbReference>
<dbReference type="PIR" id="E64741">
    <property type="entry name" value="E64741"/>
</dbReference>
<dbReference type="RefSeq" id="NP_414715.1">
    <property type="nucleotide sequence ID" value="NC_000913.3"/>
</dbReference>
<dbReference type="RefSeq" id="WP_000811923.1">
    <property type="nucleotide sequence ID" value="NZ_SSZK01000004.1"/>
</dbReference>
<dbReference type="PDB" id="1JVS">
    <property type="method" value="X-ray"/>
    <property type="resolution" value="2.20 A"/>
    <property type="chains" value="A/B=2-398"/>
</dbReference>
<dbReference type="PDB" id="1K5H">
    <property type="method" value="X-ray"/>
    <property type="resolution" value="2.50 A"/>
    <property type="chains" value="A/B/C=1-398"/>
</dbReference>
<dbReference type="PDB" id="1ONN">
    <property type="method" value="X-ray"/>
    <property type="resolution" value="2.60 A"/>
    <property type="chains" value="A/B=1-398"/>
</dbReference>
<dbReference type="PDB" id="1ONO">
    <property type="method" value="X-ray"/>
    <property type="resolution" value="2.50 A"/>
    <property type="chains" value="A/B=1-398"/>
</dbReference>
<dbReference type="PDB" id="1ONP">
    <property type="method" value="X-ray"/>
    <property type="resolution" value="2.50 A"/>
    <property type="chains" value="A/B=1-398"/>
</dbReference>
<dbReference type="PDB" id="1Q0H">
    <property type="method" value="X-ray"/>
    <property type="resolution" value="2.20 A"/>
    <property type="chains" value="A=1-398"/>
</dbReference>
<dbReference type="PDB" id="1Q0L">
    <property type="method" value="X-ray"/>
    <property type="resolution" value="2.65 A"/>
    <property type="chains" value="A=1-398"/>
</dbReference>
<dbReference type="PDB" id="1Q0Q">
    <property type="method" value="X-ray"/>
    <property type="resolution" value="1.90 A"/>
    <property type="chains" value="A/B=1-398"/>
</dbReference>
<dbReference type="PDB" id="1T1R">
    <property type="method" value="X-ray"/>
    <property type="resolution" value="2.30 A"/>
    <property type="chains" value="A/B=2-398"/>
</dbReference>
<dbReference type="PDB" id="1T1S">
    <property type="method" value="X-ray"/>
    <property type="resolution" value="2.40 A"/>
    <property type="chains" value="A/B=2-398"/>
</dbReference>
<dbReference type="PDB" id="2EGH">
    <property type="method" value="X-ray"/>
    <property type="resolution" value="2.20 A"/>
    <property type="chains" value="A/B=2-398"/>
</dbReference>
<dbReference type="PDB" id="3ANL">
    <property type="method" value="X-ray"/>
    <property type="resolution" value="2.10 A"/>
    <property type="chains" value="A/B=2-398"/>
</dbReference>
<dbReference type="PDB" id="3ANM">
    <property type="method" value="X-ray"/>
    <property type="resolution" value="2.00 A"/>
    <property type="chains" value="A/B=2-398"/>
</dbReference>
<dbReference type="PDB" id="3ANN">
    <property type="method" value="X-ray"/>
    <property type="resolution" value="2.00 A"/>
    <property type="chains" value="A/B=2-398"/>
</dbReference>
<dbReference type="PDB" id="3R0I">
    <property type="method" value="X-ray"/>
    <property type="resolution" value="2.10 A"/>
    <property type="chains" value="A/B=1-398"/>
</dbReference>
<dbReference type="PDBsum" id="1JVS"/>
<dbReference type="PDBsum" id="1K5H"/>
<dbReference type="PDBsum" id="1ONN"/>
<dbReference type="PDBsum" id="1ONO"/>
<dbReference type="PDBsum" id="1ONP"/>
<dbReference type="PDBsum" id="1Q0H"/>
<dbReference type="PDBsum" id="1Q0L"/>
<dbReference type="PDBsum" id="1Q0Q"/>
<dbReference type="PDBsum" id="1T1R"/>
<dbReference type="PDBsum" id="1T1S"/>
<dbReference type="PDBsum" id="2EGH"/>
<dbReference type="PDBsum" id="3ANL"/>
<dbReference type="PDBsum" id="3ANM"/>
<dbReference type="PDBsum" id="3ANN"/>
<dbReference type="PDBsum" id="3R0I"/>
<dbReference type="SMR" id="P45568"/>
<dbReference type="BioGRID" id="4259751">
    <property type="interactions" value="208"/>
</dbReference>
<dbReference type="ComplexPortal" id="CPX-1930">
    <property type="entry name" value="DXP reductoisomerase complex"/>
</dbReference>
<dbReference type="DIP" id="DIP-9484N"/>
<dbReference type="FunCoup" id="P45568">
    <property type="interactions" value="471"/>
</dbReference>
<dbReference type="IntAct" id="P45568">
    <property type="interactions" value="6"/>
</dbReference>
<dbReference type="STRING" id="511145.b0173"/>
<dbReference type="BindingDB" id="P45568"/>
<dbReference type="ChEMBL" id="CHEMBL4091"/>
<dbReference type="DrugBank" id="DB02496">
    <property type="generic name" value="1-Deoxy-D-xylulose 5-phosphate"/>
</dbReference>
<dbReference type="DrugBank" id="DB03649">
    <property type="generic name" value="[{(5-Chloro-2-Pyridinyl)Amino} Methylene]-1,1-Bisphosphonate"/>
</dbReference>
<dbReference type="DrugBank" id="DB02948">
    <property type="generic name" value="Fosmidomycin"/>
</dbReference>
<dbReference type="jPOST" id="P45568"/>
<dbReference type="PaxDb" id="511145-b0173"/>
<dbReference type="EnsemblBacteria" id="AAC73284">
    <property type="protein sequence ID" value="AAC73284"/>
    <property type="gene ID" value="b0173"/>
</dbReference>
<dbReference type="GeneID" id="93777252"/>
<dbReference type="GeneID" id="945019"/>
<dbReference type="KEGG" id="ecj:JW0168"/>
<dbReference type="KEGG" id="eco:b0173"/>
<dbReference type="KEGG" id="ecoc:C3026_00790"/>
<dbReference type="PATRIC" id="fig|1411691.4.peg.2107"/>
<dbReference type="EchoBASE" id="EB2575"/>
<dbReference type="eggNOG" id="COG0743">
    <property type="taxonomic scope" value="Bacteria"/>
</dbReference>
<dbReference type="HOGENOM" id="CLU_035714_4_0_6"/>
<dbReference type="InParanoid" id="P45568"/>
<dbReference type="OMA" id="AHPNWVM"/>
<dbReference type="OrthoDB" id="9806546at2"/>
<dbReference type="PhylomeDB" id="P45568"/>
<dbReference type="BioCyc" id="EcoCyc:DXPREDISOM-MONOMER"/>
<dbReference type="BioCyc" id="MetaCyc:DXPREDISOM-MONOMER"/>
<dbReference type="BRENDA" id="1.1.1.267">
    <property type="organism ID" value="2026"/>
</dbReference>
<dbReference type="SABIO-RK" id="P45568"/>
<dbReference type="UniPathway" id="UPA00056">
    <property type="reaction ID" value="UER00092"/>
</dbReference>
<dbReference type="EvolutionaryTrace" id="P45568"/>
<dbReference type="PRO" id="PR:P45568"/>
<dbReference type="Proteomes" id="UP000000625">
    <property type="component" value="Chromosome"/>
</dbReference>
<dbReference type="GO" id="GO:1990065">
    <property type="term" value="C:Dxr protein complex"/>
    <property type="evidence" value="ECO:0000353"/>
    <property type="project" value="ComplexPortal"/>
</dbReference>
<dbReference type="GO" id="GO:0030604">
    <property type="term" value="F:1-deoxy-D-xylulose-5-phosphate reductoisomerase activity"/>
    <property type="evidence" value="ECO:0000314"/>
    <property type="project" value="EcoCyc"/>
</dbReference>
<dbReference type="GO" id="GO:0042802">
    <property type="term" value="F:identical protein binding"/>
    <property type="evidence" value="ECO:0000314"/>
    <property type="project" value="EcoCyc"/>
</dbReference>
<dbReference type="GO" id="GO:0030145">
    <property type="term" value="F:manganese ion binding"/>
    <property type="evidence" value="ECO:0000314"/>
    <property type="project" value="EcoCyc"/>
</dbReference>
<dbReference type="GO" id="GO:0070402">
    <property type="term" value="F:NADPH binding"/>
    <property type="evidence" value="ECO:0000318"/>
    <property type="project" value="GO_Central"/>
</dbReference>
<dbReference type="GO" id="GO:0019288">
    <property type="term" value="P:isopentenyl diphosphate biosynthetic process, methylerythritol 4-phosphate pathway"/>
    <property type="evidence" value="ECO:0000315"/>
    <property type="project" value="EcoCyc"/>
</dbReference>
<dbReference type="GO" id="GO:0051484">
    <property type="term" value="P:isopentenyl diphosphate biosynthetic process, methylerythritol 4-phosphate pathway involved in terpenoid biosynthetic process"/>
    <property type="evidence" value="ECO:0000314"/>
    <property type="project" value="ComplexPortal"/>
</dbReference>
<dbReference type="FunFam" id="1.10.1740.10:FF:000004">
    <property type="entry name" value="1-deoxy-D-xylulose 5-phosphate reductoisomerase"/>
    <property type="match status" value="1"/>
</dbReference>
<dbReference type="FunFam" id="3.40.50.720:FF:000045">
    <property type="entry name" value="1-deoxy-D-xylulose 5-phosphate reductoisomerase"/>
    <property type="match status" value="1"/>
</dbReference>
<dbReference type="Gene3D" id="1.10.1740.10">
    <property type="match status" value="1"/>
</dbReference>
<dbReference type="Gene3D" id="3.40.50.720">
    <property type="entry name" value="NAD(P)-binding Rossmann-like Domain"/>
    <property type="match status" value="1"/>
</dbReference>
<dbReference type="HAMAP" id="MF_00183">
    <property type="entry name" value="DXP_reductoisom"/>
    <property type="match status" value="1"/>
</dbReference>
<dbReference type="InterPro" id="IPR003821">
    <property type="entry name" value="DXP_reductoisomerase"/>
</dbReference>
<dbReference type="InterPro" id="IPR013644">
    <property type="entry name" value="DXP_reductoisomerase_C"/>
</dbReference>
<dbReference type="InterPro" id="IPR013512">
    <property type="entry name" value="DXP_reductoisomerase_N"/>
</dbReference>
<dbReference type="InterPro" id="IPR026877">
    <property type="entry name" value="DXPR_C"/>
</dbReference>
<dbReference type="InterPro" id="IPR036169">
    <property type="entry name" value="DXPR_C_sf"/>
</dbReference>
<dbReference type="InterPro" id="IPR036291">
    <property type="entry name" value="NAD(P)-bd_dom_sf"/>
</dbReference>
<dbReference type="NCBIfam" id="TIGR00243">
    <property type="entry name" value="Dxr"/>
    <property type="match status" value="1"/>
</dbReference>
<dbReference type="NCBIfam" id="NF003938">
    <property type="entry name" value="PRK05447.1-1"/>
    <property type="match status" value="1"/>
</dbReference>
<dbReference type="NCBIfam" id="NF009114">
    <property type="entry name" value="PRK12464.1"/>
    <property type="match status" value="1"/>
</dbReference>
<dbReference type="PANTHER" id="PTHR30525">
    <property type="entry name" value="1-DEOXY-D-XYLULOSE 5-PHOSPHATE REDUCTOISOMERASE"/>
    <property type="match status" value="1"/>
</dbReference>
<dbReference type="PANTHER" id="PTHR30525:SF0">
    <property type="entry name" value="1-DEOXY-D-XYLULOSE 5-PHOSPHATE REDUCTOISOMERASE, CHLOROPLASTIC"/>
    <property type="match status" value="1"/>
</dbReference>
<dbReference type="Pfam" id="PF08436">
    <property type="entry name" value="DXP_redisom_C"/>
    <property type="match status" value="1"/>
</dbReference>
<dbReference type="Pfam" id="PF02670">
    <property type="entry name" value="DXP_reductoisom"/>
    <property type="match status" value="1"/>
</dbReference>
<dbReference type="Pfam" id="PF13288">
    <property type="entry name" value="DXPR_C"/>
    <property type="match status" value="1"/>
</dbReference>
<dbReference type="PIRSF" id="PIRSF006205">
    <property type="entry name" value="Dxp_reductismrs"/>
    <property type="match status" value="1"/>
</dbReference>
<dbReference type="SUPFAM" id="SSF69055">
    <property type="entry name" value="1-deoxy-D-xylulose-5-phosphate reductoisomerase, C-terminal domain"/>
    <property type="match status" value="1"/>
</dbReference>
<dbReference type="SUPFAM" id="SSF55347">
    <property type="entry name" value="Glyceraldehyde-3-phosphate dehydrogenase-like, C-terminal domain"/>
    <property type="match status" value="1"/>
</dbReference>
<dbReference type="SUPFAM" id="SSF51735">
    <property type="entry name" value="NAD(P)-binding Rossmann-fold domains"/>
    <property type="match status" value="1"/>
</dbReference>